<accession>Q6FFQ1</accession>
<dbReference type="EC" id="4.2.1.41" evidence="1"/>
<dbReference type="EMBL" id="CR543861">
    <property type="protein sequence ID" value="CAG67106.1"/>
    <property type="molecule type" value="Genomic_DNA"/>
</dbReference>
<dbReference type="RefSeq" id="WP_004930673.1">
    <property type="nucleotide sequence ID" value="NC_005966.1"/>
</dbReference>
<dbReference type="SMR" id="Q6FFQ1"/>
<dbReference type="STRING" id="202950.GCA_001485005_01868"/>
<dbReference type="GeneID" id="45232652"/>
<dbReference type="KEGG" id="aci:ACIAD0130"/>
<dbReference type="eggNOG" id="COG0329">
    <property type="taxonomic scope" value="Bacteria"/>
</dbReference>
<dbReference type="HOGENOM" id="CLU_049343_5_2_6"/>
<dbReference type="OrthoDB" id="8995637at2"/>
<dbReference type="BioCyc" id="ASP62977:ACIAD_RS00610-MONOMER"/>
<dbReference type="BioCyc" id="MetaCyc:MONOMER-15625"/>
<dbReference type="BRENDA" id="4.2.1.41">
    <property type="organism ID" value="8909"/>
</dbReference>
<dbReference type="SABIO-RK" id="Q6FFQ1"/>
<dbReference type="UniPathway" id="UPA00564">
    <property type="reaction ID" value="UER00628"/>
</dbReference>
<dbReference type="Proteomes" id="UP000000430">
    <property type="component" value="Chromosome"/>
</dbReference>
<dbReference type="GO" id="GO:0008840">
    <property type="term" value="F:4-hydroxy-tetrahydrodipicolinate synthase activity"/>
    <property type="evidence" value="ECO:0007669"/>
    <property type="project" value="TreeGrafter"/>
</dbReference>
<dbReference type="GO" id="GO:0047448">
    <property type="term" value="F:5-dehydro-4-deoxyglucarate dehydratase activity"/>
    <property type="evidence" value="ECO:0007669"/>
    <property type="project" value="UniProtKB-UniRule"/>
</dbReference>
<dbReference type="GO" id="GO:0042838">
    <property type="term" value="P:D-glucarate catabolic process"/>
    <property type="evidence" value="ECO:0007669"/>
    <property type="project" value="UniProtKB-UniRule"/>
</dbReference>
<dbReference type="CDD" id="cd00951">
    <property type="entry name" value="KDGDH"/>
    <property type="match status" value="1"/>
</dbReference>
<dbReference type="Gene3D" id="3.20.20.70">
    <property type="entry name" value="Aldolase class I"/>
    <property type="match status" value="1"/>
</dbReference>
<dbReference type="HAMAP" id="MF_00694">
    <property type="entry name" value="KDGDH"/>
    <property type="match status" value="1"/>
</dbReference>
<dbReference type="InterPro" id="IPR013785">
    <property type="entry name" value="Aldolase_TIM"/>
</dbReference>
<dbReference type="InterPro" id="IPR002220">
    <property type="entry name" value="DapA-like"/>
</dbReference>
<dbReference type="InterPro" id="IPR017655">
    <property type="entry name" value="Dehydro-deoxyglucarate_dehyd"/>
</dbReference>
<dbReference type="NCBIfam" id="TIGR03249">
    <property type="entry name" value="KdgD"/>
    <property type="match status" value="1"/>
</dbReference>
<dbReference type="NCBIfam" id="NF002958">
    <property type="entry name" value="PRK03620.1"/>
    <property type="match status" value="1"/>
</dbReference>
<dbReference type="PANTHER" id="PTHR12128:SF19">
    <property type="entry name" value="5-DEHYDRO-4-DEOXYGLUCARATE DEHYDRATASE 2-RELATED"/>
    <property type="match status" value="1"/>
</dbReference>
<dbReference type="PANTHER" id="PTHR12128">
    <property type="entry name" value="DIHYDRODIPICOLINATE SYNTHASE"/>
    <property type="match status" value="1"/>
</dbReference>
<dbReference type="Pfam" id="PF00701">
    <property type="entry name" value="DHDPS"/>
    <property type="match status" value="1"/>
</dbReference>
<dbReference type="PIRSF" id="PIRSF001365">
    <property type="entry name" value="DHDPS"/>
    <property type="match status" value="1"/>
</dbReference>
<dbReference type="PRINTS" id="PR00146">
    <property type="entry name" value="DHPICSNTHASE"/>
</dbReference>
<dbReference type="SMART" id="SM01130">
    <property type="entry name" value="DHDPS"/>
    <property type="match status" value="1"/>
</dbReference>
<dbReference type="SUPFAM" id="SSF51569">
    <property type="entry name" value="Aldolase"/>
    <property type="match status" value="1"/>
</dbReference>
<keyword id="KW-0456">Lyase</keyword>
<gene>
    <name type="ordered locus">ACIAD0130</name>
</gene>
<comment type="catalytic activity">
    <reaction evidence="1 2">
        <text>5-dehydro-4-deoxy-D-glucarate + H(+) = 2,5-dioxopentanoate + CO2 + H2O</text>
        <dbReference type="Rhea" id="RHEA:24608"/>
        <dbReference type="ChEBI" id="CHEBI:15377"/>
        <dbReference type="ChEBI" id="CHEBI:15378"/>
        <dbReference type="ChEBI" id="CHEBI:16526"/>
        <dbReference type="ChEBI" id="CHEBI:42819"/>
        <dbReference type="ChEBI" id="CHEBI:58136"/>
        <dbReference type="EC" id="4.2.1.41"/>
    </reaction>
</comment>
<comment type="pathway">
    <text evidence="1 2">Carbohydrate acid metabolism; D-glucarate degradation; 2,5-dioxopentanoate from D-glucarate: step 2/2.</text>
</comment>
<comment type="similarity">
    <text evidence="1">Belongs to the DapA family.</text>
</comment>
<sequence>MDALELKNIVSDGLLSFPVTDFDQNGDFNAASYAKRLEWLAPYGASALFAAGGTGEFFSLTGDEYSDVIKTAVDACKGSVPIIAGAGGPTRQAILQAQEAERLGAHGILLMPHYLTEASQEGLVEHVKQVCNAVNFGVIFYNRSVSKLNVDSLQQLVESCPNLIGFKDSSGQIDMMTEVVQTLGDRLSYLGGLPTAEIFAAPYKALGSPVYSSAVFNFIPKTAMEFYNALRNDDFATTQRLIRDFFLPLIKIRNRKSGYAVSMVKAGAKIVGHDAGPVRPPLSDLTPQDYEDLAALIATLGPQ</sequence>
<reference key="1">
    <citation type="journal article" date="2004" name="Nucleic Acids Res.">
        <title>Unique features revealed by the genome sequence of Acinetobacter sp. ADP1, a versatile and naturally transformation competent bacterium.</title>
        <authorList>
            <person name="Barbe V."/>
            <person name="Vallenet D."/>
            <person name="Fonknechten N."/>
            <person name="Kreimeyer A."/>
            <person name="Oztas S."/>
            <person name="Labarre L."/>
            <person name="Cruveiller S."/>
            <person name="Robert C."/>
            <person name="Duprat S."/>
            <person name="Wincker P."/>
            <person name="Ornston L.N."/>
            <person name="Weissenbach J."/>
            <person name="Marliere P."/>
            <person name="Cohen G.N."/>
            <person name="Medigue C."/>
        </authorList>
    </citation>
    <scope>NUCLEOTIDE SEQUENCE [LARGE SCALE GENOMIC DNA]</scope>
    <source>
        <strain>ATCC 33305 / BD413 / ADP1</strain>
    </source>
</reference>
<reference key="2">
    <citation type="journal article" date="2008" name="J. Biol. Chem.">
        <title>New insights into the alternative D-glucarate degradation pathway.</title>
        <authorList>
            <person name="Aghaie A."/>
            <person name="Lechaplais C."/>
            <person name="Sirven P."/>
            <person name="Tricot S."/>
            <person name="Besnard-Gonnet M."/>
            <person name="Muselet D."/>
            <person name="de Berardinis V."/>
            <person name="Kreimeyer A."/>
            <person name="Gyapay G."/>
            <person name="Salanoubat M."/>
            <person name="Perret A."/>
        </authorList>
    </citation>
    <scope>PATHWAY</scope>
    <scope>CATALYTIC ACTIVITY</scope>
    <source>
        <strain>ATCC 33305 / BD413 / ADP1</strain>
    </source>
</reference>
<evidence type="ECO:0000255" key="1">
    <source>
        <dbReference type="HAMAP-Rule" id="MF_00694"/>
    </source>
</evidence>
<evidence type="ECO:0000269" key="2">
    <source>
    </source>
</evidence>
<name>KDGD_ACIAD</name>
<protein>
    <recommendedName>
        <fullName evidence="1">Probable 5-dehydro-4-deoxyglucarate dehydratase</fullName>
        <ecNumber evidence="1">4.2.1.41</ecNumber>
    </recommendedName>
    <alternativeName>
        <fullName evidence="1">5-keto-4-deoxy-glucarate dehydratase</fullName>
        <shortName evidence="1">KDGDH</shortName>
    </alternativeName>
</protein>
<organism>
    <name type="scientific">Acinetobacter baylyi (strain ATCC 33305 / BD413 / ADP1)</name>
    <dbReference type="NCBI Taxonomy" id="62977"/>
    <lineage>
        <taxon>Bacteria</taxon>
        <taxon>Pseudomonadati</taxon>
        <taxon>Pseudomonadota</taxon>
        <taxon>Gammaproteobacteria</taxon>
        <taxon>Moraxellales</taxon>
        <taxon>Moraxellaceae</taxon>
        <taxon>Acinetobacter</taxon>
    </lineage>
</organism>
<feature type="chain" id="PRO_1000045396" description="Probable 5-dehydro-4-deoxyglucarate dehydratase">
    <location>
        <begin position="1"/>
        <end position="303"/>
    </location>
</feature>
<proteinExistence type="evidence at protein level"/>